<feature type="chain" id="PRO_0000079874" description="Splicing factor ESS-2">
    <location>
        <begin position="1"/>
        <end position="531"/>
    </location>
</feature>
<feature type="region of interest" description="Disordered" evidence="1">
    <location>
        <begin position="104"/>
        <end position="163"/>
    </location>
</feature>
<feature type="region of interest" description="Disordered" evidence="1">
    <location>
        <begin position="453"/>
        <end position="531"/>
    </location>
</feature>
<feature type="compositionally biased region" description="Polar residues" evidence="1">
    <location>
        <begin position="105"/>
        <end position="114"/>
    </location>
</feature>
<feature type="compositionally biased region" description="Low complexity" evidence="1">
    <location>
        <begin position="125"/>
        <end position="136"/>
    </location>
</feature>
<feature type="compositionally biased region" description="Low complexity" evidence="1">
    <location>
        <begin position="464"/>
        <end position="477"/>
    </location>
</feature>
<feature type="compositionally biased region" description="Polar residues" evidence="1">
    <location>
        <begin position="480"/>
        <end position="498"/>
    </location>
</feature>
<feature type="splice variant" id="VSP_015951" description="In isoform a." evidence="4">
    <location>
        <begin position="412"/>
        <end position="413"/>
    </location>
</feature>
<organism>
    <name type="scientific">Caenorhabditis elegans</name>
    <dbReference type="NCBI Taxonomy" id="6239"/>
    <lineage>
        <taxon>Eukaryota</taxon>
        <taxon>Metazoa</taxon>
        <taxon>Ecdysozoa</taxon>
        <taxon>Nematoda</taxon>
        <taxon>Chromadorea</taxon>
        <taxon>Rhabditida</taxon>
        <taxon>Rhabditina</taxon>
        <taxon>Rhabditomorpha</taxon>
        <taxon>Rhabditoidea</taxon>
        <taxon>Rhabditidae</taxon>
        <taxon>Peloderinae</taxon>
        <taxon>Caenorhabditis</taxon>
    </lineage>
</organism>
<name>ESS2_CAEEL</name>
<proteinExistence type="inferred from homology"/>
<reference key="1">
    <citation type="journal article" date="1994" name="Nature">
        <title>2.2 Mb of contiguous nucleotide sequence from chromosome III of C. elegans.</title>
        <authorList>
            <person name="Wilson R."/>
            <person name="Ainscough R."/>
            <person name="Anderson K."/>
            <person name="Baynes C."/>
            <person name="Berks M."/>
            <person name="Bonfield J."/>
            <person name="Burton J."/>
            <person name="Connell M."/>
            <person name="Copsey T."/>
            <person name="Cooper J."/>
            <person name="Coulson A."/>
            <person name="Craxton M."/>
            <person name="Dear S."/>
            <person name="Du Z."/>
            <person name="Durbin R."/>
            <person name="Favello A."/>
            <person name="Fraser A."/>
            <person name="Fulton L."/>
            <person name="Gardner A."/>
            <person name="Green P."/>
            <person name="Hawkins T."/>
            <person name="Hillier L."/>
            <person name="Jier M."/>
            <person name="Johnston L."/>
            <person name="Jones M."/>
            <person name="Kershaw J."/>
            <person name="Kirsten J."/>
            <person name="Laisster N."/>
            <person name="Latreille P."/>
            <person name="Lightning J."/>
            <person name="Lloyd C."/>
            <person name="Mortimore B."/>
            <person name="O'Callaghan M."/>
            <person name="Parsons J."/>
            <person name="Percy C."/>
            <person name="Rifken L."/>
            <person name="Roopra A."/>
            <person name="Saunders D."/>
            <person name="Shownkeen R."/>
            <person name="Sims M."/>
            <person name="Smaldon N."/>
            <person name="Smith A."/>
            <person name="Smith M."/>
            <person name="Sonnhammer E."/>
            <person name="Staden R."/>
            <person name="Sulston J."/>
            <person name="Thierry-Mieg J."/>
            <person name="Thomas K."/>
            <person name="Vaudin M."/>
            <person name="Vaughan K."/>
            <person name="Waterston R."/>
            <person name="Watson A."/>
            <person name="Weinstock L."/>
            <person name="Wilkinson-Sproat J."/>
            <person name="Wohldman P."/>
        </authorList>
    </citation>
    <scope>NUCLEOTIDE SEQUENCE [LARGE SCALE GENOMIC DNA]</scope>
    <source>
        <strain>Bristol N2</strain>
    </source>
</reference>
<reference key="2">
    <citation type="journal article" date="1998" name="Science">
        <title>Genome sequence of the nematode C. elegans: a platform for investigating biology.</title>
        <authorList>
            <consortium name="The C. elegans sequencing consortium"/>
        </authorList>
    </citation>
    <scope>NUCLEOTIDE SEQUENCE [LARGE SCALE GENOMIC DNA]</scope>
    <scope>ALTERNATIVE SPLICING</scope>
    <source>
        <strain>Bristol N2</strain>
    </source>
</reference>
<reference key="3">
    <citation type="journal article" date="1996" name="Mamm. Genome">
        <title>Cloning and comparative mapping of a gene from the commonly deleted region of DiGeorge and Velocardiofacial syndromes conserved in C. elegans.</title>
        <authorList>
            <person name="Rizzu P."/>
            <person name="Lindsay E.A."/>
            <person name="Taylor C."/>
            <person name="O'Donnell H."/>
            <person name="Levy A."/>
            <person name="Scambler P.J."/>
            <person name="Baldini A."/>
        </authorList>
    </citation>
    <scope>SIMILARITY</scope>
</reference>
<reference key="4">
    <citation type="journal article" date="2014" name="Genetics">
        <title>Systematic analyses of rpm-1 suppressors reveal roles for ESS-2 in mRNA splicing in Caenorhabditis elegans.</title>
        <authorList>
            <person name="Noma K."/>
            <person name="Goncharov A."/>
            <person name="Jin Y."/>
        </authorList>
    </citation>
    <scope>FUNCTION</scope>
    <scope>SUBCELLULAR LOCATION</scope>
</reference>
<keyword id="KW-0025">Alternative splicing</keyword>
<keyword id="KW-0539">Nucleus</keyword>
<keyword id="KW-1185">Reference proteome</keyword>
<protein>
    <recommendedName>
        <fullName evidence="3">Splicing factor ESS-2</fullName>
    </recommendedName>
    <alternativeName>
        <fullName>ES2 similar protein 2</fullName>
    </alternativeName>
</protein>
<evidence type="ECO:0000256" key="1">
    <source>
        <dbReference type="SAM" id="MobiDB-lite"/>
    </source>
</evidence>
<evidence type="ECO:0000269" key="2">
    <source>
    </source>
</evidence>
<evidence type="ECO:0000303" key="3">
    <source>
    </source>
</evidence>
<evidence type="ECO:0000305" key="4"/>
<comment type="function">
    <text evidence="2">Regulates pre-mRNA splicing.</text>
</comment>
<comment type="subcellular location">
    <subcellularLocation>
        <location evidence="2">Nucleus</location>
    </subcellularLocation>
</comment>
<comment type="alternative products">
    <event type="alternative splicing"/>
    <isoform>
        <id>P34420-1</id>
        <name>b</name>
        <sequence type="displayed"/>
    </isoform>
    <isoform>
        <id>P34420-2</id>
        <name>a</name>
        <sequence type="described" ref="VSP_015951"/>
    </isoform>
</comment>
<comment type="similarity">
    <text evidence="4">Belongs to the ESS2 family.</text>
</comment>
<sequence>MSSFDKNDERAQLMVPKSINEGKVVKLSQKTLVTKKIERQVVPEEKYIAGLDKIIEKDYFPHLKKMQAQKEYLEAVANKDINKIKELQMKFCSTGSVRTDRSFRTPITTRSTTEAPDVSSFDADTPGPSSASTSSAHDWMQSPMPFANEEGDNEALNRKRKKKKEETLTSYLNKYTSEDNASFEELAKVMREREDARRPWVYKAEEEHNKNLVTRQAIAAEADVQLALKHAVDADDNRPLNVDNWAYKAWNTVLFNPDGAALTPAEIADAARKQQTEINKRGTRFPDSGKLKPSDEAMTRAAVSHALANAGKVDFLGNEVTPANSFKLLETPNPNPDDMDSPLMTWGEIDGTPFRLDAPDVTEHSLPGAAPVFKIPEVPYREKIAQSMNDSIAAKYRDKRKVAMRAAEGAHFSRTPGFGSKRVSDKLAQLSPAAQKLATKKLGLKMLPAHKSPFASPKIMSNWSRPSSSKRSTTPGSAWSRGSTTPGSSWSQGAQTPGTPGIESMIRRKGDNVGPSTSAGAADRANAGDFF</sequence>
<gene>
    <name type="primary">ess-2</name>
    <name type="ORF">F42H10.7</name>
</gene>
<accession>P34420</accession>
<accession>Q6AHR6</accession>
<dbReference type="EMBL" id="FO080327">
    <property type="protein sequence ID" value="CCD62885.1"/>
    <property type="molecule type" value="Genomic_DNA"/>
</dbReference>
<dbReference type="EMBL" id="FO080327">
    <property type="protein sequence ID" value="CCD62886.1"/>
    <property type="molecule type" value="Genomic_DNA"/>
</dbReference>
<dbReference type="PIR" id="S44649">
    <property type="entry name" value="S44649"/>
</dbReference>
<dbReference type="RefSeq" id="NP_001022580.1">
    <molecule id="P34420-2"/>
    <property type="nucleotide sequence ID" value="NM_001027409.6"/>
</dbReference>
<dbReference type="RefSeq" id="NP_001022581.1">
    <molecule id="P34420-1"/>
    <property type="nucleotide sequence ID" value="NM_001027410.5"/>
</dbReference>
<dbReference type="SMR" id="P34420"/>
<dbReference type="BioGRID" id="41404">
    <property type="interactions" value="16"/>
</dbReference>
<dbReference type="DIP" id="DIP-25557N"/>
<dbReference type="FunCoup" id="P34420">
    <property type="interactions" value="2691"/>
</dbReference>
<dbReference type="IntAct" id="P34420">
    <property type="interactions" value="11"/>
</dbReference>
<dbReference type="MINT" id="P34420"/>
<dbReference type="STRING" id="6239.F42H10.7b.1"/>
<dbReference type="iPTMnet" id="P34420"/>
<dbReference type="PaxDb" id="6239-F42H10.7b"/>
<dbReference type="PeptideAtlas" id="P34420"/>
<dbReference type="EnsemblMetazoa" id="F42H10.7a.1">
    <molecule id="P34420-2"/>
    <property type="protein sequence ID" value="F42H10.7a.1"/>
    <property type="gene ID" value="WBGene00018371"/>
</dbReference>
<dbReference type="EnsemblMetazoa" id="F42H10.7b.1">
    <molecule id="P34420-1"/>
    <property type="protein sequence ID" value="F42H10.7b.1"/>
    <property type="gene ID" value="WBGene00018371"/>
</dbReference>
<dbReference type="GeneID" id="176200"/>
<dbReference type="KEGG" id="cel:CELE_F42H10.7"/>
<dbReference type="UCSC" id="F42H10.7b">
    <molecule id="P34420-1"/>
    <property type="organism name" value="c. elegans"/>
</dbReference>
<dbReference type="AGR" id="WB:WBGene00018371"/>
<dbReference type="CTD" id="176200"/>
<dbReference type="WormBase" id="F42H10.7a">
    <molecule id="P34420-2"/>
    <property type="protein sequence ID" value="CE00169"/>
    <property type="gene ID" value="WBGene00018371"/>
    <property type="gene designation" value="ess-2"/>
</dbReference>
<dbReference type="WormBase" id="F42H10.7b">
    <molecule id="P34420-1"/>
    <property type="protein sequence ID" value="CE37109"/>
    <property type="gene ID" value="WBGene00018371"/>
    <property type="gene designation" value="ess-2"/>
</dbReference>
<dbReference type="eggNOG" id="KOG2627">
    <property type="taxonomic scope" value="Eukaryota"/>
</dbReference>
<dbReference type="GeneTree" id="ENSGT00390000009387"/>
<dbReference type="InParanoid" id="P34420"/>
<dbReference type="OMA" id="YKAWNTV"/>
<dbReference type="OrthoDB" id="19679at2759"/>
<dbReference type="PhylomeDB" id="P34420"/>
<dbReference type="SignaLink" id="P34420"/>
<dbReference type="PRO" id="PR:P34420"/>
<dbReference type="Proteomes" id="UP000001940">
    <property type="component" value="Chromosome III"/>
</dbReference>
<dbReference type="Bgee" id="WBGene00018371">
    <property type="expression patterns" value="Expressed in germ line (C elegans) and 4 other cell types or tissues"/>
</dbReference>
<dbReference type="GO" id="GO:0071013">
    <property type="term" value="C:catalytic step 2 spliceosome"/>
    <property type="evidence" value="ECO:0000318"/>
    <property type="project" value="GO_Central"/>
</dbReference>
<dbReference type="GO" id="GO:0005634">
    <property type="term" value="C:nucleus"/>
    <property type="evidence" value="ECO:0000314"/>
    <property type="project" value="WormBase"/>
</dbReference>
<dbReference type="InterPro" id="IPR019148">
    <property type="entry name" value="Nuclear_protein_DGCR14_ESS-2"/>
</dbReference>
<dbReference type="PANTHER" id="PTHR12940">
    <property type="entry name" value="ES-2 PROTEIN - RELATED"/>
    <property type="match status" value="1"/>
</dbReference>
<dbReference type="PANTHER" id="PTHR12940:SF0">
    <property type="entry name" value="SPLICING FACTOR ESS-2 HOMOLOG"/>
    <property type="match status" value="1"/>
</dbReference>
<dbReference type="Pfam" id="PF09751">
    <property type="entry name" value="Es2"/>
    <property type="match status" value="1"/>
</dbReference>